<dbReference type="EMBL" id="BA000004">
    <property type="protein sequence ID" value="BAB03983.1"/>
    <property type="molecule type" value="Genomic_DNA"/>
</dbReference>
<dbReference type="PIR" id="H83682">
    <property type="entry name" value="H83682"/>
</dbReference>
<dbReference type="RefSeq" id="WP_010896446.1">
    <property type="nucleotide sequence ID" value="NC_002570.2"/>
</dbReference>
<dbReference type="SMR" id="Q9KG49"/>
<dbReference type="STRING" id="272558.gene:10726117"/>
<dbReference type="KEGG" id="bha:BH0264"/>
<dbReference type="eggNOG" id="COG5662">
    <property type="taxonomic scope" value="Bacteria"/>
</dbReference>
<dbReference type="HOGENOM" id="CLU_1347302_0_0_9"/>
<dbReference type="OrthoDB" id="9782842at2"/>
<dbReference type="Proteomes" id="UP000001258">
    <property type="component" value="Chromosome"/>
</dbReference>
<dbReference type="GO" id="GO:0016020">
    <property type="term" value="C:membrane"/>
    <property type="evidence" value="ECO:0007669"/>
    <property type="project" value="UniProtKB-SubCell"/>
</dbReference>
<dbReference type="GO" id="GO:0046872">
    <property type="term" value="F:metal ion binding"/>
    <property type="evidence" value="ECO:0007669"/>
    <property type="project" value="UniProtKB-KW"/>
</dbReference>
<dbReference type="Gene3D" id="1.10.10.1320">
    <property type="entry name" value="Anti-sigma factor, zinc-finger domain"/>
    <property type="match status" value="1"/>
</dbReference>
<dbReference type="InterPro" id="IPR041916">
    <property type="entry name" value="Anti_sigma_zinc_sf"/>
</dbReference>
<dbReference type="InterPro" id="IPR027383">
    <property type="entry name" value="Znf_put"/>
</dbReference>
<dbReference type="Pfam" id="PF13490">
    <property type="entry name" value="zf-HC2"/>
    <property type="match status" value="1"/>
</dbReference>
<accession>Q9KG49</accession>
<feature type="chain" id="PRO_0000248140" description="Anti-sigma-W factor RsiW">
    <location>
        <begin position="1"/>
        <end position="213"/>
    </location>
</feature>
<feature type="topological domain" description="Cytoplasmic" evidence="2">
    <location>
        <begin position="1"/>
        <end position="86"/>
    </location>
</feature>
<feature type="transmembrane region" description="Helical" evidence="2">
    <location>
        <begin position="87"/>
        <end position="109"/>
    </location>
</feature>
<feature type="topological domain" description="Extracellular" evidence="2">
    <location>
        <begin position="110"/>
        <end position="213"/>
    </location>
</feature>
<feature type="binding site" evidence="1">
    <location>
        <position position="30"/>
    </location>
    <ligand>
        <name>Zn(2+)</name>
        <dbReference type="ChEBI" id="CHEBI:29105"/>
    </ligand>
</feature>
<feature type="binding site" evidence="1">
    <location>
        <position position="34"/>
    </location>
    <ligand>
        <name>Zn(2+)</name>
        <dbReference type="ChEBI" id="CHEBI:29105"/>
    </ligand>
</feature>
<feature type="binding site" evidence="1">
    <location>
        <position position="37"/>
    </location>
    <ligand>
        <name>Zn(2+)</name>
        <dbReference type="ChEBI" id="CHEBI:29105"/>
    </ligand>
</feature>
<proteinExistence type="inferred from homology"/>
<protein>
    <recommendedName>
        <fullName>Anti-sigma-W factor RsiW</fullName>
    </recommendedName>
</protein>
<name>RSIW_HALH5</name>
<comment type="function">
    <text evidence="1">Is the anti-sigma factor for SigW. The presence of RsiW leads to the inactivation of SigW, and its proteolytic destruction to sigma-W activation (By similarity).</text>
</comment>
<comment type="cofactor">
    <cofactor evidence="1">
        <name>Zn(2+)</name>
        <dbReference type="ChEBI" id="CHEBI:29105"/>
    </cofactor>
    <text evidence="1">Binds 1 Zn(2+) ion per subunit.</text>
</comment>
<comment type="subcellular location">
    <subcellularLocation>
        <location>Membrane</location>
        <topology>Single-pass membrane protein</topology>
    </subcellularLocation>
    <text evidence="1">Site-2 clipped RsiW is released from the membrane to the cytoplasm.</text>
</comment>
<comment type="PTM">
    <text evidence="1">Is processed by three successive proteolytic events. First, the extracellular region of RsiW is cleaved by PrsW (Site-1 cleavage) in response to cell envelope stresses. Next, it undergoes cleavage at an intramembrane site (Site-2 cleavage) mediated by RasP. This cleavage uncovers a cryptic proteolytic tag with conserved alanine residues in the transmembrane segment, that is recognized mainly by the ClpXP protease, which completely degrades the protein in the cytoplasm and leads to the induction of the sigma-W-controlled genes (By similarity).</text>
</comment>
<comment type="similarity">
    <text evidence="3">Belongs to the zinc-associated anti-sigma factor (ZAS) superfamily. Anti-sigma-W factor family.</text>
</comment>
<evidence type="ECO:0000250" key="1"/>
<evidence type="ECO:0000255" key="2"/>
<evidence type="ECO:0000305" key="3"/>
<sequence length="213" mass="23947">MSCEQHYRTLIDKYIDGEATAEERQELNEHLETCDACFEYMLEVRKVVAFVQSASHVQAPEGFTENVMKNLPKRKQTNRFKVWMRRYPLAVAAAVFVLLMSTSLFSMWSSDGEHVTVTGTGNVSIDQESGRVIVPEGEVIQGDLVVRNGELIIEGEVQGNVLLVNSSQYLASPGSVSGEIDEVNQILDWIWYHTKKFLTKVIDISDEKNSPSS</sequence>
<reference key="1">
    <citation type="journal article" date="2000" name="Nucleic Acids Res.">
        <title>Complete genome sequence of the alkaliphilic bacterium Bacillus halodurans and genomic sequence comparison with Bacillus subtilis.</title>
        <authorList>
            <person name="Takami H."/>
            <person name="Nakasone K."/>
            <person name="Takaki Y."/>
            <person name="Maeno G."/>
            <person name="Sasaki R."/>
            <person name="Masui N."/>
            <person name="Fuji F."/>
            <person name="Hirama C."/>
            <person name="Nakamura Y."/>
            <person name="Ogasawara N."/>
            <person name="Kuhara S."/>
            <person name="Horikoshi K."/>
        </authorList>
    </citation>
    <scope>NUCLEOTIDE SEQUENCE [LARGE SCALE GENOMIC DNA]</scope>
    <source>
        <strain>ATCC BAA-125 / DSM 18197 / FERM 7344 / JCM 9153 / C-125</strain>
    </source>
</reference>
<organism>
    <name type="scientific">Halalkalibacterium halodurans (strain ATCC BAA-125 / DSM 18197 / FERM 7344 / JCM 9153 / C-125)</name>
    <name type="common">Bacillus halodurans</name>
    <dbReference type="NCBI Taxonomy" id="272558"/>
    <lineage>
        <taxon>Bacteria</taxon>
        <taxon>Bacillati</taxon>
        <taxon>Bacillota</taxon>
        <taxon>Bacilli</taxon>
        <taxon>Bacillales</taxon>
        <taxon>Bacillaceae</taxon>
        <taxon>Halalkalibacterium (ex Joshi et al. 2022)</taxon>
    </lineage>
</organism>
<keyword id="KW-0472">Membrane</keyword>
<keyword id="KW-0479">Metal-binding</keyword>
<keyword id="KW-1185">Reference proteome</keyword>
<keyword id="KW-0812">Transmembrane</keyword>
<keyword id="KW-1133">Transmembrane helix</keyword>
<keyword id="KW-0862">Zinc</keyword>
<gene>
    <name type="primary">rsiW</name>
    <name type="ordered locus">BH0264</name>
</gene>